<name>RL25_PSYWF</name>
<feature type="chain" id="PRO_1000073299" description="Large ribosomal subunit protein bL25">
    <location>
        <begin position="1"/>
        <end position="224"/>
    </location>
</feature>
<feature type="region of interest" description="Disordered" evidence="2">
    <location>
        <begin position="196"/>
        <end position="224"/>
    </location>
</feature>
<feature type="compositionally biased region" description="Acidic residues" evidence="2">
    <location>
        <begin position="197"/>
        <end position="208"/>
    </location>
</feature>
<accession>A5WHA5</accession>
<gene>
    <name evidence="1" type="primary">rplY</name>
    <name evidence="1" type="synonym">ctc</name>
    <name type="ordered locus">PsycPRwf_2106</name>
</gene>
<dbReference type="EMBL" id="CP000713">
    <property type="protein sequence ID" value="ABQ95046.1"/>
    <property type="molecule type" value="Genomic_DNA"/>
</dbReference>
<dbReference type="SMR" id="A5WHA5"/>
<dbReference type="STRING" id="349106.PsycPRwf_2106"/>
<dbReference type="KEGG" id="prw:PsycPRwf_2106"/>
<dbReference type="eggNOG" id="COG1825">
    <property type="taxonomic scope" value="Bacteria"/>
</dbReference>
<dbReference type="HOGENOM" id="CLU_075939_0_1_6"/>
<dbReference type="GO" id="GO:0022625">
    <property type="term" value="C:cytosolic large ribosomal subunit"/>
    <property type="evidence" value="ECO:0007669"/>
    <property type="project" value="TreeGrafter"/>
</dbReference>
<dbReference type="GO" id="GO:0008097">
    <property type="term" value="F:5S rRNA binding"/>
    <property type="evidence" value="ECO:0007669"/>
    <property type="project" value="InterPro"/>
</dbReference>
<dbReference type="GO" id="GO:0003735">
    <property type="term" value="F:structural constituent of ribosome"/>
    <property type="evidence" value="ECO:0007669"/>
    <property type="project" value="InterPro"/>
</dbReference>
<dbReference type="GO" id="GO:0006412">
    <property type="term" value="P:translation"/>
    <property type="evidence" value="ECO:0007669"/>
    <property type="project" value="UniProtKB-UniRule"/>
</dbReference>
<dbReference type="CDD" id="cd00495">
    <property type="entry name" value="Ribosomal_L25_TL5_CTC"/>
    <property type="match status" value="1"/>
</dbReference>
<dbReference type="Gene3D" id="2.170.120.20">
    <property type="entry name" value="Ribosomal protein L25, beta domain"/>
    <property type="match status" value="1"/>
</dbReference>
<dbReference type="Gene3D" id="2.40.240.10">
    <property type="entry name" value="Ribosomal Protein L25, Chain P"/>
    <property type="match status" value="1"/>
</dbReference>
<dbReference type="HAMAP" id="MF_01336">
    <property type="entry name" value="Ribosomal_bL25"/>
    <property type="match status" value="1"/>
</dbReference>
<dbReference type="HAMAP" id="MF_01334">
    <property type="entry name" value="Ribosomal_bL25_CTC"/>
    <property type="match status" value="1"/>
</dbReference>
<dbReference type="InterPro" id="IPR020056">
    <property type="entry name" value="Rbsml_bL25/Gln-tRNA_synth_N"/>
</dbReference>
<dbReference type="InterPro" id="IPR011035">
    <property type="entry name" value="Ribosomal_bL25/Gln-tRNA_synth"/>
</dbReference>
<dbReference type="InterPro" id="IPR020057">
    <property type="entry name" value="Ribosomal_bL25_b-dom"/>
</dbReference>
<dbReference type="InterPro" id="IPR037121">
    <property type="entry name" value="Ribosomal_bL25_C"/>
</dbReference>
<dbReference type="InterPro" id="IPR001021">
    <property type="entry name" value="Ribosomal_bL25_long"/>
</dbReference>
<dbReference type="InterPro" id="IPR020055">
    <property type="entry name" value="Ribosomal_bL25_short"/>
</dbReference>
<dbReference type="InterPro" id="IPR029751">
    <property type="entry name" value="Ribosomal_L25_dom"/>
</dbReference>
<dbReference type="InterPro" id="IPR020930">
    <property type="entry name" value="Ribosomal_uL5_bac-type"/>
</dbReference>
<dbReference type="NCBIfam" id="TIGR00731">
    <property type="entry name" value="bL25_bact_ctc"/>
    <property type="match status" value="1"/>
</dbReference>
<dbReference type="NCBIfam" id="NF004128">
    <property type="entry name" value="PRK05618.1-2"/>
    <property type="match status" value="1"/>
</dbReference>
<dbReference type="NCBIfam" id="NF004130">
    <property type="entry name" value="PRK05618.1-5"/>
    <property type="match status" value="1"/>
</dbReference>
<dbReference type="NCBIfam" id="NF004612">
    <property type="entry name" value="PRK05943.1"/>
    <property type="match status" value="1"/>
</dbReference>
<dbReference type="PANTHER" id="PTHR33284">
    <property type="entry name" value="RIBOSOMAL PROTEIN L25/GLN-TRNA SYNTHETASE, ANTI-CODON-BINDING DOMAIN-CONTAINING PROTEIN"/>
    <property type="match status" value="1"/>
</dbReference>
<dbReference type="PANTHER" id="PTHR33284:SF1">
    <property type="entry name" value="RIBOSOMAL PROTEIN L25_GLN-TRNA SYNTHETASE, ANTI-CODON-BINDING DOMAIN-CONTAINING PROTEIN"/>
    <property type="match status" value="1"/>
</dbReference>
<dbReference type="Pfam" id="PF01386">
    <property type="entry name" value="Ribosomal_L25p"/>
    <property type="match status" value="1"/>
</dbReference>
<dbReference type="Pfam" id="PF14693">
    <property type="entry name" value="Ribosomal_TL5_C"/>
    <property type="match status" value="1"/>
</dbReference>
<dbReference type="SUPFAM" id="SSF50715">
    <property type="entry name" value="Ribosomal protein L25-like"/>
    <property type="match status" value="1"/>
</dbReference>
<sequence>MSDILYTVNGITRTNDQQGKGASRRLRKQNLVPAIIYGGNEEPTAIAIKKNELWKLLENEAFFSNILTINLEGEEHLAVIKDLQRHPSKGFAMHADFQRIVKGQKINMQIPLHFTGREEAPGIKAGGILSTLVTDIEIVCLPSNLPEFLEVDVSNLEIGESLHLTDIKLPEGVVIFELDVDEPVDRTVVNMQAPTVEEVDTDAEEVDAADVPATEQGSEEDKGE</sequence>
<reference key="1">
    <citation type="submission" date="2007-05" db="EMBL/GenBank/DDBJ databases">
        <title>Complete sequence of chromosome of Psychrobacter sp. PRwf-1.</title>
        <authorList>
            <consortium name="US DOE Joint Genome Institute"/>
            <person name="Copeland A."/>
            <person name="Lucas S."/>
            <person name="Lapidus A."/>
            <person name="Barry K."/>
            <person name="Detter J.C."/>
            <person name="Glavina del Rio T."/>
            <person name="Hammon N."/>
            <person name="Israni S."/>
            <person name="Dalin E."/>
            <person name="Tice H."/>
            <person name="Pitluck S."/>
            <person name="Chain P."/>
            <person name="Malfatti S."/>
            <person name="Shin M."/>
            <person name="Vergez L."/>
            <person name="Schmutz J."/>
            <person name="Larimer F."/>
            <person name="Land M."/>
            <person name="Hauser L."/>
            <person name="Kyrpides N."/>
            <person name="Kim E."/>
            <person name="Tiedje J."/>
            <person name="Richardson P."/>
        </authorList>
    </citation>
    <scope>NUCLEOTIDE SEQUENCE [LARGE SCALE GENOMIC DNA]</scope>
    <source>
        <strain>PRwf-1</strain>
    </source>
</reference>
<keyword id="KW-0687">Ribonucleoprotein</keyword>
<keyword id="KW-0689">Ribosomal protein</keyword>
<keyword id="KW-0694">RNA-binding</keyword>
<keyword id="KW-0699">rRNA-binding</keyword>
<protein>
    <recommendedName>
        <fullName evidence="1">Large ribosomal subunit protein bL25</fullName>
    </recommendedName>
    <alternativeName>
        <fullName evidence="3">50S ribosomal protein L25</fullName>
    </alternativeName>
    <alternativeName>
        <fullName evidence="1">General stress protein CTC</fullName>
    </alternativeName>
</protein>
<organism>
    <name type="scientific">Psychrobacter sp. (strain PRwf-1)</name>
    <dbReference type="NCBI Taxonomy" id="349106"/>
    <lineage>
        <taxon>Bacteria</taxon>
        <taxon>Pseudomonadati</taxon>
        <taxon>Pseudomonadota</taxon>
        <taxon>Gammaproteobacteria</taxon>
        <taxon>Moraxellales</taxon>
        <taxon>Moraxellaceae</taxon>
        <taxon>Psychrobacter</taxon>
    </lineage>
</organism>
<comment type="function">
    <text evidence="1">This is one of the proteins that binds to the 5S RNA in the ribosome where it forms part of the central protuberance.</text>
</comment>
<comment type="subunit">
    <text evidence="1">Part of the 50S ribosomal subunit; part of the 5S rRNA/L5/L18/L25 subcomplex. Contacts the 5S rRNA. Binds to the 5S rRNA independently of L5 and L18.</text>
</comment>
<comment type="similarity">
    <text evidence="1">Belongs to the bacterial ribosomal protein bL25 family. CTC subfamily.</text>
</comment>
<proteinExistence type="inferred from homology"/>
<evidence type="ECO:0000255" key="1">
    <source>
        <dbReference type="HAMAP-Rule" id="MF_01334"/>
    </source>
</evidence>
<evidence type="ECO:0000256" key="2">
    <source>
        <dbReference type="SAM" id="MobiDB-lite"/>
    </source>
</evidence>
<evidence type="ECO:0000305" key="3"/>